<sequence length="9" mass="959">GLVPPADKY</sequence>
<dbReference type="Proteomes" id="UP000084051">
    <property type="component" value="Unplaced"/>
</dbReference>
<dbReference type="GO" id="GO:0005576">
    <property type="term" value="C:extracellular region"/>
    <property type="evidence" value="ECO:0007669"/>
    <property type="project" value="UniProtKB-KW"/>
</dbReference>
<evidence type="ECO:0000269" key="1">
    <source>
    </source>
</evidence>
<evidence type="ECO:0000303" key="2">
    <source>
    </source>
</evidence>
<evidence type="ECO:0000305" key="3"/>
<reference evidence="3" key="1">
    <citation type="journal article" date="1997" name="J. Biol. Chem.">
        <title>Differential extraction and protein sequencing reveals major differences in patterns of primary cell wall proteins from plants.</title>
        <authorList>
            <person name="Robertson D."/>
            <person name="Mitchell G.P."/>
            <person name="Gilroy J.S."/>
            <person name="Gerrish C."/>
            <person name="Bolwell G.P."/>
            <person name="Slabas A.R."/>
        </authorList>
    </citation>
    <scope>PROTEIN SEQUENCE</scope>
    <scope>SUBCELLULAR LOCATION</scope>
</reference>
<name>CWP01_TOBAC</name>
<accession>P80778</accession>
<feature type="chain" id="PRO_0000079622" description="70 kDa cell wall protein">
    <location>
        <begin position="1"/>
        <end position="9" status="greater than"/>
    </location>
</feature>
<feature type="non-terminal residue" evidence="2">
    <location>
        <position position="9"/>
    </location>
</feature>
<proteinExistence type="evidence at protein level"/>
<comment type="subcellular location">
    <subcellularLocation>
        <location evidence="1">Secreted</location>
        <location evidence="1">Cell wall</location>
    </subcellularLocation>
</comment>
<protein>
    <recommendedName>
        <fullName>70 kDa cell wall protein</fullName>
    </recommendedName>
</protein>
<organism>
    <name type="scientific">Nicotiana tabacum</name>
    <name type="common">Common tobacco</name>
    <dbReference type="NCBI Taxonomy" id="4097"/>
    <lineage>
        <taxon>Eukaryota</taxon>
        <taxon>Viridiplantae</taxon>
        <taxon>Streptophyta</taxon>
        <taxon>Embryophyta</taxon>
        <taxon>Tracheophyta</taxon>
        <taxon>Spermatophyta</taxon>
        <taxon>Magnoliopsida</taxon>
        <taxon>eudicotyledons</taxon>
        <taxon>Gunneridae</taxon>
        <taxon>Pentapetalae</taxon>
        <taxon>asterids</taxon>
        <taxon>lamiids</taxon>
        <taxon>Solanales</taxon>
        <taxon>Solanaceae</taxon>
        <taxon>Nicotianoideae</taxon>
        <taxon>Nicotianeae</taxon>
        <taxon>Nicotiana</taxon>
    </lineage>
</organism>
<keyword id="KW-0134">Cell wall</keyword>
<keyword id="KW-0903">Direct protein sequencing</keyword>
<keyword id="KW-1185">Reference proteome</keyword>
<keyword id="KW-0964">Secreted</keyword>